<accession>Q9UHD4</accession>
<accession>D3DS73</accession>
<accession>Q546V8</accession>
<accession>Q9NNW9</accession>
<keyword id="KW-0002">3D-structure</keyword>
<keyword id="KW-0053">Apoptosis</keyword>
<keyword id="KW-0968">Cytoplasmic vesicle</keyword>
<keyword id="KW-0256">Endoplasmic reticulum</keyword>
<keyword id="KW-0333">Golgi apparatus</keyword>
<keyword id="KW-0945">Host-virus interaction</keyword>
<keyword id="KW-0551">Lipid droplet</keyword>
<keyword id="KW-0472">Membrane</keyword>
<keyword id="KW-0597">Phosphoprotein</keyword>
<keyword id="KW-1267">Proteomics identification</keyword>
<keyword id="KW-1185">Reference proteome</keyword>
<comment type="function">
    <text evidence="1 2 4 7">Lipid transferase specifically expressed in hepatocytes, which promotes unilocular lipid droplet formation by mediating lipid droplet fusion (PubMed:35939579). Lipid droplet fusion promotes their enlargement, restricting lipolysis and favoring lipid storage (PubMed:35939579). Localizes on the lipid droplet surface, at focal contact sites between lipid droplets, and mediates atypical lipid droplet fusion by promoting directional net neutral lipid transfer from the smaller to larger lipid droplets (By similarity). The transfer direction may be driven by the internal pressure difference between the contacting lipid droplet pair (By similarity). Promotes lipid exchange and lipid droplet fusion in both small and large lipid droplet-containing hepatocytes (By similarity). In addition to its role in lipid droplet fusion, also involved in cytoplasmic vesicle biogenesis and transport (By similarity). Required for very-low-density lipoprotein (VLDL) lipidation and maturation (By similarity). Probably involved in the biogenesis of VLDL transport vesicles by forming a COPII vesicle coat and facilitating the formation of endoplasmic reticulum-derived large vesicles (By similarity). Also involved in sterol-regulated export of the SCAP-SREBP complex, composed of SCAP, SREBF1/SREBP1 and SREBF2/SREBP2, by promoting loading of SCAP-SREBP into COPII vesicles (By similarity). May also activate apoptosis (PubMed:10619428).</text>
</comment>
<comment type="function">
    <text evidence="6">(Microbial infection) Involved in Hepatatis C virus (HCV) assembly and required for HCV entry into hepatocytes.</text>
</comment>
<comment type="subunit">
    <text evidence="1 4">Interacts with DFFA (PubMed:10619428). Interacts with DFFB; inhibited by DFFB (PubMed:10619428). Interacts with APOB. Interacts with PREB/SEC12; facilitating loading of SCAP-SREBP into COPII vesicles (By similarity).</text>
</comment>
<comment type="subunit">
    <text evidence="6">(Microbial infection) Interacts (via N-terminus) with HCV non-structural protein 5A (via N-terminus); this interaction seems to regulate the association of HCV particles with ApoE.</text>
</comment>
<comment type="interaction">
    <interactant intactId="EBI-7062247">
        <id>Q9UHD4</id>
    </interactant>
    <interactant intactId="EBI-348517">
        <id>O95870</id>
        <label>ABHD16A</label>
    </interactant>
    <organismsDiffer>false</organismsDiffer>
    <experiments>3</experiments>
</comment>
<comment type="interaction">
    <interactant intactId="EBI-7062247">
        <id>Q9UHD4</id>
    </interactant>
    <interactant intactId="EBI-2865743">
        <id>Q8WV93</id>
        <label>AFG1L</label>
    </interactant>
    <organismsDiffer>false</organismsDiffer>
    <experiments>3</experiments>
</comment>
<comment type="interaction">
    <interactant intactId="EBI-7062247">
        <id>Q9UHD4</id>
    </interactant>
    <interactant intactId="EBI-1220105">
        <id>P02654</id>
        <label>APOC1</label>
    </interactant>
    <organismsDiffer>false</organismsDiffer>
    <experiments>3</experiments>
</comment>
<comment type="interaction">
    <interactant intactId="EBI-7062247">
        <id>Q9UHD4</id>
    </interactant>
    <interactant intactId="EBI-718376">
        <id>Q9NVJ2</id>
        <label>ARL8B</label>
    </interactant>
    <organismsDiffer>false</organismsDiffer>
    <experiments>3</experiments>
</comment>
<comment type="interaction">
    <interactant intactId="EBI-7062247">
        <id>Q9UHD4</id>
    </interactant>
    <interactant intactId="EBI-2270000">
        <id>P56385</id>
        <label>ATP5ME</label>
    </interactant>
    <organismsDiffer>false</organismsDiffer>
    <experiments>3</experiments>
</comment>
<comment type="interaction">
    <interactant intactId="EBI-7062247">
        <id>Q9UHD4</id>
    </interactant>
    <interactant intactId="EBI-17870477">
        <id>P56378-2</id>
        <label>ATP5MPL</label>
    </interactant>
    <organismsDiffer>false</organismsDiffer>
    <experiments>3</experiments>
</comment>
<comment type="interaction">
    <interactant intactId="EBI-7062247">
        <id>Q9UHD4</id>
    </interactant>
    <interactant intactId="EBI-707714">
        <id>Q92843</id>
        <label>BCL2L2</label>
    </interactant>
    <organismsDiffer>false</organismsDiffer>
    <experiments>3</experiments>
</comment>
<comment type="interaction">
    <interactant intactId="EBI-7062247">
        <id>Q9UHD4</id>
    </interactant>
    <interactant intactId="EBI-5656182">
        <id>O75155</id>
        <label>CAND2</label>
    </interactant>
    <organismsDiffer>false</organismsDiffer>
    <experiments>3</experiments>
</comment>
<comment type="interaction">
    <interactant intactId="EBI-7062247">
        <id>Q9UHD4</id>
    </interactant>
    <interactant intactId="EBI-7062247">
        <id>Q9UHD4</id>
        <label>CIDEB</label>
    </interactant>
    <organismsDiffer>false</organismsDiffer>
    <experiments>7</experiments>
</comment>
<comment type="interaction">
    <interactant intactId="EBI-7062247">
        <id>Q9UHD4</id>
    </interactant>
    <interactant intactId="EBI-10206780">
        <id>P35523</id>
        <label>CLCN1</label>
    </interactant>
    <organismsDiffer>false</organismsDiffer>
    <experiments>3</experiments>
</comment>
<comment type="interaction">
    <interactant intactId="EBI-7062247">
        <id>Q9UHD4</id>
    </interactant>
    <interactant intactId="EBI-23373346">
        <id>P30085-3</id>
        <label>CMPK1</label>
    </interactant>
    <organismsDiffer>false</organismsDiffer>
    <experiments>3</experiments>
</comment>
<comment type="interaction">
    <interactant intactId="EBI-7062247">
        <id>Q9UHD4</id>
    </interactant>
    <interactant intactId="EBI-2528309">
        <id>Q03692</id>
        <label>COL10A1</label>
    </interactant>
    <organismsDiffer>false</organismsDiffer>
    <experiments>3</experiments>
</comment>
<comment type="interaction">
    <interactant intactId="EBI-7062247">
        <id>Q9UHD4</id>
    </interactant>
    <interactant intactId="EBI-747133">
        <id>P27658</id>
        <label>COL8A1</label>
    </interactant>
    <organismsDiffer>false</organismsDiffer>
    <experiments>3</experiments>
</comment>
<comment type="interaction">
    <interactant intactId="EBI-7062247">
        <id>Q9UHD4</id>
    </interactant>
    <interactant intactId="EBI-2606678">
        <id>P15954</id>
        <label>COX7C</label>
    </interactant>
    <organismsDiffer>false</organismsDiffer>
    <experiments>3</experiments>
</comment>
<comment type="interaction">
    <interactant intactId="EBI-7062247">
        <id>Q9UHD4</id>
    </interactant>
    <interactant intactId="EBI-3923585">
        <id>Q8N5I4</id>
        <label>DHRSX</label>
    </interactant>
    <organismsDiffer>false</organismsDiffer>
    <experiments>3</experiments>
</comment>
<comment type="interaction">
    <interactant intactId="EBI-7062247">
        <id>Q9UHD4</id>
    </interactant>
    <interactant intactId="EBI-356767">
        <id>Q96EY1</id>
        <label>DNAJA3</label>
    </interactant>
    <organismsDiffer>false</organismsDiffer>
    <experiments>3</experiments>
</comment>
<comment type="interaction">
    <interactant intactId="EBI-7062247">
        <id>Q9UHD4</id>
    </interactant>
    <interactant intactId="EBI-10291578">
        <id>Q96MZ4</id>
        <label>FAM218A</label>
    </interactant>
    <organismsDiffer>false</organismsDiffer>
    <experiments>3</experiments>
</comment>
<comment type="interaction">
    <interactant intactId="EBI-7062247">
        <id>Q9UHD4</id>
    </interactant>
    <interactant intactId="EBI-724839">
        <id>Q14318</id>
        <label>FKBP8</label>
    </interactant>
    <organismsDiffer>false</organismsDiffer>
    <experiments>3</experiments>
</comment>
<comment type="interaction">
    <interactant intactId="EBI-7062247">
        <id>Q9UHD4</id>
    </interactant>
    <interactant intactId="EBI-11961494">
        <id>Q6VB84</id>
        <label>FOXD4L3</label>
    </interactant>
    <organismsDiffer>false</organismsDiffer>
    <experiments>3</experiments>
</comment>
<comment type="interaction">
    <interactant intactId="EBI-7062247">
        <id>Q9UHD4</id>
    </interactant>
    <interactant intactId="EBI-714482">
        <id>Q9BWH2</id>
        <label>FUNDC2</label>
    </interactant>
    <organismsDiffer>false</organismsDiffer>
    <experiments>3</experiments>
</comment>
<comment type="interaction">
    <interactant intactId="EBI-7062247">
        <id>Q9UHD4</id>
    </interactant>
    <interactant intactId="EBI-715444">
        <id>P23434</id>
        <label>GCSH</label>
    </interactant>
    <organismsDiffer>false</organismsDiffer>
    <experiments>3</experiments>
</comment>
<comment type="interaction">
    <interactant intactId="EBI-7062247">
        <id>Q9UHD4</id>
    </interactant>
    <interactant intactId="EBI-17871073">
        <id>P16520-2</id>
        <label>GNB3</label>
    </interactant>
    <organismsDiffer>false</organismsDiffer>
    <experiments>3</experiments>
</comment>
<comment type="interaction">
    <interactant intactId="EBI-7062247">
        <id>Q9UHD4</id>
    </interactant>
    <interactant intactId="EBI-7600236">
        <id>Q9HCL2</id>
        <label>GPAM</label>
    </interactant>
    <organismsDiffer>false</organismsDiffer>
    <experiments>3</experiments>
</comment>
<comment type="interaction">
    <interactant intactId="EBI-7062247">
        <id>Q9UHD4</id>
    </interactant>
    <interactant intactId="EBI-10294329">
        <id>Q99525</id>
        <label>H4C7</label>
    </interactant>
    <organismsDiffer>false</organismsDiffer>
    <experiments>3</experiments>
</comment>
<comment type="interaction">
    <interactant intactId="EBI-7062247">
        <id>Q9UHD4</id>
    </interactant>
    <interactant intactId="EBI-11956675">
        <id>Q9GZV7</id>
        <label>HAPLN2</label>
    </interactant>
    <organismsDiffer>false</organismsDiffer>
    <experiments>3</experiments>
</comment>
<comment type="interaction">
    <interactant intactId="EBI-7062247">
        <id>Q9UHD4</id>
    </interactant>
    <interactant intactId="EBI-10763431">
        <id>P53701</id>
        <label>HCCS</label>
    </interactant>
    <organismsDiffer>false</organismsDiffer>
    <experiments>3</experiments>
</comment>
<comment type="interaction">
    <interactant intactId="EBI-7062247">
        <id>Q9UHD4</id>
    </interactant>
    <interactant intactId="EBI-12809676">
        <id>A8MV81</id>
        <label>HIGD1C</label>
    </interactant>
    <organismsDiffer>false</organismsDiffer>
    <experiments>3</experiments>
</comment>
<comment type="interaction">
    <interactant intactId="EBI-7062247">
        <id>Q9UHD4</id>
    </interactant>
    <interactant intactId="EBI-466029">
        <id>P42858</id>
        <label>HTT</label>
    </interactant>
    <organismsDiffer>false</organismsDiffer>
    <experiments>3</experiments>
</comment>
<comment type="interaction">
    <interactant intactId="EBI-7062247">
        <id>Q9UHD4</id>
    </interactant>
    <interactant intactId="EBI-17872065">
        <id>Q86SI9</id>
        <label>IRX2-DT</label>
    </interactant>
    <organismsDiffer>false</organismsDiffer>
    <experiments>3</experiments>
</comment>
<comment type="interaction">
    <interactant intactId="EBI-7062247">
        <id>Q9UHD4</id>
    </interactant>
    <interactant intactId="EBI-21591415">
        <id>P13473-2</id>
        <label>LAMP2</label>
    </interactant>
    <organismsDiffer>false</organismsDiffer>
    <experiments>3</experiments>
</comment>
<comment type="interaction">
    <interactant intactId="EBI-7062247">
        <id>Q9UHD4</id>
    </interactant>
    <interactant intactId="EBI-1050204">
        <id>Q5EB52</id>
        <label>MEST</label>
    </interactant>
    <organismsDiffer>false</organismsDiffer>
    <experiments>3</experiments>
</comment>
<comment type="interaction">
    <interactant intactId="EBI-7062247">
        <id>Q9UHD4</id>
    </interactant>
    <interactant intactId="EBI-12886442">
        <id>Q5TGZ0</id>
        <label>MICOS10</label>
    </interactant>
    <organismsDiffer>false</organismsDiffer>
    <experiments>3</experiments>
</comment>
<comment type="interaction">
    <interactant intactId="EBI-7062247">
        <id>Q9UHD4</id>
    </interactant>
    <interactant intactId="EBI-719403">
        <id>O95563</id>
        <label>MPC2</label>
    </interactant>
    <organismsDiffer>false</organismsDiffer>
    <experiments>3</experiments>
</comment>
<comment type="interaction">
    <interactant intactId="EBI-7062247">
        <id>Q9UHD4</id>
    </interactant>
    <interactant intactId="EBI-2115401">
        <id>Q9P0J6</id>
        <label>MRPL36</label>
    </interactant>
    <organismsDiffer>false</organismsDiffer>
    <experiments>3</experiments>
</comment>
<comment type="interaction">
    <interactant intactId="EBI-7062247">
        <id>Q9UHD4</id>
    </interactant>
    <interactant intactId="EBI-1055359">
        <id>Q9BQC6</id>
        <label>MRPL57</label>
    </interactant>
    <organismsDiffer>false</organismsDiffer>
    <experiments>3</experiments>
</comment>
<comment type="interaction">
    <interactant intactId="EBI-7062247">
        <id>Q9UHD4</id>
    </interactant>
    <interactant intactId="EBI-948435">
        <id>Q7Z6M4</id>
        <label>MTERF4</label>
    </interactant>
    <organismsDiffer>false</organismsDiffer>
    <experiments>3</experiments>
</comment>
<comment type="interaction">
    <interactant intactId="EBI-7062247">
        <id>Q9UHD4</id>
    </interactant>
    <interactant intactId="EBI-4290865">
        <id>Q96EY5</id>
        <label>MVB12A</label>
    </interactant>
    <organismsDiffer>false</organismsDiffer>
    <experiments>2</experiments>
</comment>
<comment type="interaction">
    <interactant intactId="EBI-7062247">
        <id>Q9UHD4</id>
    </interactant>
    <interactant intactId="EBI-2863682">
        <id>Q9Y3Q0</id>
        <label>NAALAD2</label>
    </interactant>
    <organismsDiffer>false</organismsDiffer>
    <experiments>3</experiments>
</comment>
<comment type="interaction">
    <interactant intactId="EBI-7062247">
        <id>Q9UHD4</id>
    </interactant>
    <interactant intactId="EBI-11978907">
        <id>Q9ULP0-2</id>
        <label>NDRG4</label>
    </interactant>
    <organismsDiffer>false</organismsDiffer>
    <experiments>3</experiments>
</comment>
<comment type="interaction">
    <interactant intactId="EBI-7062247">
        <id>Q9UHD4</id>
    </interactant>
    <interactant intactId="EBI-725252">
        <id>Q9UMS0</id>
        <label>NFU1</label>
    </interactant>
    <organismsDiffer>false</organismsDiffer>
    <experiments>3</experiments>
</comment>
<comment type="interaction">
    <interactant intactId="EBI-7062247">
        <id>Q9UHD4</id>
    </interactant>
    <interactant intactId="EBI-744871">
        <id>O00746</id>
        <label>NME4</label>
    </interactant>
    <organismsDiffer>false</organismsDiffer>
    <experiments>3</experiments>
</comment>
<comment type="interaction">
    <interactant intactId="EBI-7062247">
        <id>Q9UHD4</id>
    </interactant>
    <interactant intactId="EBI-741171">
        <id>Q96AL5</id>
        <label>PBX3</label>
    </interactant>
    <organismsDiffer>false</organismsDiffer>
    <experiments>3</experiments>
</comment>
<comment type="interaction">
    <interactant intactId="EBI-7062247">
        <id>Q9UHD4</id>
    </interactant>
    <interactant intactId="EBI-751566">
        <id>O00330</id>
        <label>PDHX</label>
    </interactant>
    <organismsDiffer>false</organismsDiffer>
    <experiments>3</experiments>
</comment>
<comment type="interaction">
    <interactant intactId="EBI-7062247">
        <id>Q9UHD4</id>
    </interactant>
    <interactant intactId="EBI-12339509">
        <id>Q96LB9</id>
        <label>PGLYRP3</label>
    </interactant>
    <organismsDiffer>false</organismsDiffer>
    <experiments>3</experiments>
</comment>
<comment type="interaction">
    <interactant intactId="EBI-7062247">
        <id>Q9UHD4</id>
    </interactant>
    <interactant intactId="EBI-17870882">
        <id>Q9UG56-2</id>
        <label>PISD</label>
    </interactant>
    <organismsDiffer>false</organismsDiffer>
    <experiments>3</experiments>
</comment>
<comment type="interaction">
    <interactant intactId="EBI-7062247">
        <id>Q9UHD4</id>
    </interactant>
    <interactant intactId="EBI-5544229">
        <id>P30405</id>
        <label>PPIF</label>
    </interactant>
    <organismsDiffer>false</organismsDiffer>
    <experiments>3</experiments>
</comment>
<comment type="interaction">
    <interactant intactId="EBI-7062247">
        <id>Q9UHD4</id>
    </interactant>
    <interactant intactId="EBI-9009040">
        <id>O60895</id>
        <label>RAMP2</label>
    </interactant>
    <organismsDiffer>false</organismsDiffer>
    <experiments>3</experiments>
</comment>
<comment type="interaction">
    <interactant intactId="EBI-7062247">
        <id>Q9UHD4</id>
    </interactant>
    <interactant intactId="EBI-17589229">
        <id>Q6NTF9-3</id>
        <label>RHBDD2</label>
    </interactant>
    <organismsDiffer>false</organismsDiffer>
    <experiments>3</experiments>
</comment>
<comment type="interaction">
    <interactant intactId="EBI-7062247">
        <id>Q9UHD4</id>
    </interactant>
    <interactant intactId="EBI-11909831">
        <id>P60602</id>
        <label>ROMO1</label>
    </interactant>
    <organismsDiffer>false</organismsDiffer>
    <experiments>3</experiments>
</comment>
<comment type="interaction">
    <interactant intactId="EBI-7062247">
        <id>Q9UHD4</id>
    </interactant>
    <interactant intactId="EBI-10217913">
        <id>Q14D33</id>
        <label>RTP5</label>
    </interactant>
    <organismsDiffer>false</organismsDiffer>
    <experiments>3</experiments>
</comment>
<comment type="interaction">
    <interactant intactId="EBI-7062247">
        <id>Q9UHD4</id>
    </interactant>
    <interactant intactId="EBI-6677144">
        <id>P0DJI9</id>
        <label>SAA2</label>
    </interactant>
    <organismsDiffer>false</organismsDiffer>
    <experiments>3</experiments>
</comment>
<comment type="interaction">
    <interactant intactId="EBI-7062247">
        <id>Q9UHD4</id>
    </interactant>
    <interactant intactId="EBI-750242">
        <id>P35542</id>
        <label>SAA4</label>
    </interactant>
    <organismsDiffer>false</organismsDiffer>
    <experiments>3</experiments>
</comment>
<comment type="interaction">
    <interactant intactId="EBI-7062247">
        <id>Q9UHD4</id>
    </interactant>
    <interactant intactId="EBI-4290665">
        <id>Q9Y6B6</id>
        <label>SAR1B</label>
    </interactant>
    <organismsDiffer>false</organismsDiffer>
    <experiments>3</experiments>
</comment>
<comment type="interaction">
    <interactant intactId="EBI-7062247">
        <id>Q9UHD4</id>
    </interactant>
    <interactant intactId="EBI-6656171">
        <id>O75880</id>
        <label>SCO1</label>
    </interactant>
    <organismsDiffer>false</organismsDiffer>
    <experiments>3</experiments>
</comment>
<comment type="interaction">
    <interactant intactId="EBI-7062247">
        <id>Q9UHD4</id>
    </interactant>
    <interactant intactId="EBI-357012">
        <id>O43819</id>
        <label>SCO2</label>
    </interactant>
    <organismsDiffer>false</organismsDiffer>
    <experiments>3</experiments>
</comment>
<comment type="interaction">
    <interactant intactId="EBI-7062247">
        <id>Q9UHD4</id>
    </interactant>
    <interactant intactId="EBI-12011488">
        <id>A6NFY7</id>
        <label>SDHAF1</label>
    </interactant>
    <organismsDiffer>false</organismsDiffer>
    <experiments>3</experiments>
</comment>
<comment type="interaction">
    <interactant intactId="EBI-7062247">
        <id>Q9UHD4</id>
    </interactant>
    <interactant intactId="EBI-355861">
        <id>Q9H9B4</id>
        <label>SFXN1</label>
    </interactant>
    <organismsDiffer>false</organismsDiffer>
    <experiments>3</experiments>
</comment>
<comment type="interaction">
    <interactant intactId="EBI-7062247">
        <id>Q9UHD4</id>
    </interactant>
    <interactant intactId="EBI-2623095">
        <id>Q9Y371</id>
        <label>SH3GLB1</label>
    </interactant>
    <organismsDiffer>false</organismsDiffer>
    <experiments>3</experiments>
</comment>
<comment type="interaction">
    <interactant intactId="EBI-7062247">
        <id>Q9UHD4</id>
    </interactant>
    <interactant intactId="EBI-355653">
        <id>Q92922</id>
        <label>SMARCC1</label>
    </interactant>
    <organismsDiffer>false</organismsDiffer>
    <experiments>3</experiments>
</comment>
<comment type="interaction">
    <interactant intactId="EBI-7062247">
        <id>Q9UHD4</id>
    </interactant>
    <interactant intactId="EBI-742688">
        <id>Q9NZD8</id>
        <label>SPG21</label>
    </interactant>
    <organismsDiffer>false</organismsDiffer>
    <experiments>3</experiments>
</comment>
<comment type="interaction">
    <interactant intactId="EBI-7062247">
        <id>Q9UHD4</id>
    </interactant>
    <interactant intactId="EBI-352832">
        <id>Q9UL54</id>
        <label>TAOK2</label>
    </interactant>
    <organismsDiffer>false</organismsDiffer>
    <experiments>3</experiments>
</comment>
<comment type="interaction">
    <interactant intactId="EBI-7062247">
        <id>Q9UHD4</id>
    </interactant>
    <interactant intactId="EBI-2853051">
        <id>Q13207</id>
        <label>TBX2</label>
    </interactant>
    <organismsDiffer>false</organismsDiffer>
    <experiments>3</experiments>
</comment>
<comment type="interaction">
    <interactant intactId="EBI-7062247">
        <id>Q9UHD4</id>
    </interactant>
    <interactant intactId="EBI-10278496">
        <id>Q53QW1</id>
        <label>TEX44</label>
    </interactant>
    <organismsDiffer>false</organismsDiffer>
    <experiments>5</experiments>
</comment>
<comment type="interaction">
    <interactant intactId="EBI-7062247">
        <id>Q9UHD4</id>
    </interactant>
    <interactant intactId="EBI-941422">
        <id>P07204</id>
        <label>THBD</label>
    </interactant>
    <organismsDiffer>false</organismsDiffer>
    <experiments>3</experiments>
</comment>
<comment type="interaction">
    <interactant intactId="EBI-7062247">
        <id>Q9UHD4</id>
    </interactant>
    <interactant intactId="EBI-2372529">
        <id>O60830</id>
        <label>TIMM17B</label>
    </interactant>
    <organismsDiffer>false</organismsDiffer>
    <experiments>5</experiments>
</comment>
<comment type="interaction">
    <interactant intactId="EBI-7062247">
        <id>Q9UHD4</id>
    </interactant>
    <interactant intactId="EBI-8638294">
        <id>Q9NUH8</id>
        <label>TMEM14B</label>
    </interactant>
    <organismsDiffer>false</organismsDiffer>
    <experiments>3</experiments>
</comment>
<comment type="interaction">
    <interactant intactId="EBI-7062247">
        <id>Q9UHD4</id>
    </interactant>
    <interactant intactId="EBI-17249488">
        <id>Q6ZUI0</id>
        <label>TPRG1</label>
    </interactant>
    <organismsDiffer>false</organismsDiffer>
    <experiments>3</experiments>
</comment>
<comment type="interaction">
    <interactant intactId="EBI-7062247">
        <id>Q9UHD4</id>
    </interactant>
    <interactant intactId="EBI-358058">
        <id>Q2NL82</id>
        <label>TSR1</label>
    </interactant>
    <organismsDiffer>false</organismsDiffer>
    <experiments>3</experiments>
</comment>
<comment type="interaction">
    <interactant intactId="EBI-7062247">
        <id>Q9UHD4</id>
    </interactant>
    <interactant intactId="EBI-12068150">
        <id>Q6NVU6</id>
        <label>UFSP1</label>
    </interactant>
    <organismsDiffer>false</organismsDiffer>
    <experiments>3</experiments>
</comment>
<comment type="interaction">
    <interactant intactId="EBI-7062247">
        <id>Q9UHD4</id>
    </interactant>
    <interactant intactId="EBI-6919131">
        <id>PRO_0000037572</id>
        <dbReference type="UniProtKB" id="P27958"/>
    </interactant>
    <organismsDiffer>true</organismsDiffer>
    <experiments>6</experiments>
</comment>
<comment type="subcellular location">
    <subcellularLocation>
        <location evidence="7">Lipid droplet</location>
    </subcellularLocation>
    <subcellularLocation>
        <location evidence="1">Endoplasmic reticulum membrane</location>
        <topology evidence="1">Peripheral membrane protein</topology>
        <orientation evidence="1">Cytoplasmic side</orientation>
    </subcellularLocation>
    <subcellularLocation>
        <location evidence="1">Golgi apparatus</location>
    </subcellularLocation>
    <subcellularLocation>
        <location evidence="1">Cytoplasmic vesicle</location>
        <location evidence="1">COPI-coated vesicle</location>
    </subcellularLocation>
    <text evidence="1">Enriched at lipid droplet contact sites.</text>
</comment>
<comment type="tissue specificity">
    <text evidence="5">Highly expressed in liver and small intestine and, at lower levels, in colon, kidney and spleen.</text>
</comment>
<comment type="similarity">
    <text evidence="10">Belongs to the CIDE family.</text>
</comment>
<proteinExistence type="evidence at protein level"/>
<sequence length="219" mass="24678">MEYLSALNPSDLLRSVSNISSEFGRRVWTSAPPPQRPFRVCDHKRTIRKGLTAATRQELLAKALETLLLNGVLTLVLEEDGTAVDSEDFFQLLEDDTCLMVLQSGQSWSPTRSGVLSYGLGRERPKHSKDIARFTFDVYKQNPRDLFGSLNVKATFYGLYSMSCDFQGLGPKKVLRELLRWTSTLLQGLGHMLLGISSTLRHAVEGAEQWQQKGRLHSY</sequence>
<reference key="1">
    <citation type="journal article" date="1999" name="Cell">
        <title>Solution structure of the CIDE-N domain of CIDE-B and a model for CIDE-N/CIDE-N interactions in the DNA fragmentation pathway of apoptosis.</title>
        <authorList>
            <person name="Lugovskoy A.A."/>
            <person name="Zhou P."/>
            <person name="Chou J.J."/>
            <person name="McCarty J.S."/>
            <person name="Li P."/>
            <person name="Wagner G."/>
        </authorList>
    </citation>
    <scope>NUCLEOTIDE SEQUENCE [MRNA]</scope>
    <scope>STRUCTURE BY NMR OF 1-116</scope>
    <scope>FUNCTION</scope>
    <scope>INTERACTION WITH DFFA AND DFFB</scope>
</reference>
<reference key="2">
    <citation type="journal article" date="1998" name="EMBO J.">
        <title>CIDE, a novel family of cell death activators with homology to the 45 kDa subunit of the DNA fragmentation factor.</title>
        <authorList>
            <person name="Inohara N."/>
            <person name="Koseki T."/>
            <person name="Chen S."/>
            <person name="Wu X."/>
            <person name="Nunez G."/>
        </authorList>
    </citation>
    <scope>NUCLEOTIDE SEQUENCE [MRNA]</scope>
</reference>
<reference key="3">
    <citation type="submission" date="2002-09" db="EMBL/GenBank/DDBJ databases">
        <authorList>
            <person name="Liang L."/>
            <person name="Zhao M."/>
            <person name="Li T."/>
        </authorList>
    </citation>
    <scope>NUCLEOTIDE SEQUENCE [MRNA]</scope>
    <source>
        <tissue>Liver</tissue>
    </source>
</reference>
<reference key="4">
    <citation type="journal article" date="2004" name="Nat. Genet.">
        <title>Complete sequencing and characterization of 21,243 full-length human cDNAs.</title>
        <authorList>
            <person name="Ota T."/>
            <person name="Suzuki Y."/>
            <person name="Nishikawa T."/>
            <person name="Otsuki T."/>
            <person name="Sugiyama T."/>
            <person name="Irie R."/>
            <person name="Wakamatsu A."/>
            <person name="Hayashi K."/>
            <person name="Sato H."/>
            <person name="Nagai K."/>
            <person name="Kimura K."/>
            <person name="Makita H."/>
            <person name="Sekine M."/>
            <person name="Obayashi M."/>
            <person name="Nishi T."/>
            <person name="Shibahara T."/>
            <person name="Tanaka T."/>
            <person name="Ishii S."/>
            <person name="Yamamoto J."/>
            <person name="Saito K."/>
            <person name="Kawai Y."/>
            <person name="Isono Y."/>
            <person name="Nakamura Y."/>
            <person name="Nagahari K."/>
            <person name="Murakami K."/>
            <person name="Yasuda T."/>
            <person name="Iwayanagi T."/>
            <person name="Wagatsuma M."/>
            <person name="Shiratori A."/>
            <person name="Sudo H."/>
            <person name="Hosoiri T."/>
            <person name="Kaku Y."/>
            <person name="Kodaira H."/>
            <person name="Kondo H."/>
            <person name="Sugawara M."/>
            <person name="Takahashi M."/>
            <person name="Kanda K."/>
            <person name="Yokoi T."/>
            <person name="Furuya T."/>
            <person name="Kikkawa E."/>
            <person name="Omura Y."/>
            <person name="Abe K."/>
            <person name="Kamihara K."/>
            <person name="Katsuta N."/>
            <person name="Sato K."/>
            <person name="Tanikawa M."/>
            <person name="Yamazaki M."/>
            <person name="Ninomiya K."/>
            <person name="Ishibashi T."/>
            <person name="Yamashita H."/>
            <person name="Murakawa K."/>
            <person name="Fujimori K."/>
            <person name="Tanai H."/>
            <person name="Kimata M."/>
            <person name="Watanabe M."/>
            <person name="Hiraoka S."/>
            <person name="Chiba Y."/>
            <person name="Ishida S."/>
            <person name="Ono Y."/>
            <person name="Takiguchi S."/>
            <person name="Watanabe S."/>
            <person name="Yosida M."/>
            <person name="Hotuta T."/>
            <person name="Kusano J."/>
            <person name="Kanehori K."/>
            <person name="Takahashi-Fujii A."/>
            <person name="Hara H."/>
            <person name="Tanase T.-O."/>
            <person name="Nomura Y."/>
            <person name="Togiya S."/>
            <person name="Komai F."/>
            <person name="Hara R."/>
            <person name="Takeuchi K."/>
            <person name="Arita M."/>
            <person name="Imose N."/>
            <person name="Musashino K."/>
            <person name="Yuuki H."/>
            <person name="Oshima A."/>
            <person name="Sasaki N."/>
            <person name="Aotsuka S."/>
            <person name="Yoshikawa Y."/>
            <person name="Matsunawa H."/>
            <person name="Ichihara T."/>
            <person name="Shiohata N."/>
            <person name="Sano S."/>
            <person name="Moriya S."/>
            <person name="Momiyama H."/>
            <person name="Satoh N."/>
            <person name="Takami S."/>
            <person name="Terashima Y."/>
            <person name="Suzuki O."/>
            <person name="Nakagawa S."/>
            <person name="Senoh A."/>
            <person name="Mizoguchi H."/>
            <person name="Goto Y."/>
            <person name="Shimizu F."/>
            <person name="Wakebe H."/>
            <person name="Hishigaki H."/>
            <person name="Watanabe T."/>
            <person name="Sugiyama A."/>
            <person name="Takemoto M."/>
            <person name="Kawakami B."/>
            <person name="Yamazaki M."/>
            <person name="Watanabe K."/>
            <person name="Kumagai A."/>
            <person name="Itakura S."/>
            <person name="Fukuzumi Y."/>
            <person name="Fujimori Y."/>
            <person name="Komiyama M."/>
            <person name="Tashiro H."/>
            <person name="Tanigami A."/>
            <person name="Fujiwara T."/>
            <person name="Ono T."/>
            <person name="Yamada K."/>
            <person name="Fujii Y."/>
            <person name="Ozaki K."/>
            <person name="Hirao M."/>
            <person name="Ohmori Y."/>
            <person name="Kawabata A."/>
            <person name="Hikiji T."/>
            <person name="Kobatake N."/>
            <person name="Inagaki H."/>
            <person name="Ikema Y."/>
            <person name="Okamoto S."/>
            <person name="Okitani R."/>
            <person name="Kawakami T."/>
            <person name="Noguchi S."/>
            <person name="Itoh T."/>
            <person name="Shigeta K."/>
            <person name="Senba T."/>
            <person name="Matsumura K."/>
            <person name="Nakajima Y."/>
            <person name="Mizuno T."/>
            <person name="Morinaga M."/>
            <person name="Sasaki M."/>
            <person name="Togashi T."/>
            <person name="Oyama M."/>
            <person name="Hata H."/>
            <person name="Watanabe M."/>
            <person name="Komatsu T."/>
            <person name="Mizushima-Sugano J."/>
            <person name="Satoh T."/>
            <person name="Shirai Y."/>
            <person name="Takahashi Y."/>
            <person name="Nakagawa K."/>
            <person name="Okumura K."/>
            <person name="Nagase T."/>
            <person name="Nomura N."/>
            <person name="Kikuchi H."/>
            <person name="Masuho Y."/>
            <person name="Yamashita R."/>
            <person name="Nakai K."/>
            <person name="Yada T."/>
            <person name="Nakamura Y."/>
            <person name="Ohara O."/>
            <person name="Isogai T."/>
            <person name="Sugano S."/>
        </authorList>
    </citation>
    <scope>NUCLEOTIDE SEQUENCE [LARGE SCALE MRNA]</scope>
    <source>
        <tissue>Ileal mucosa</tissue>
    </source>
</reference>
<reference key="5">
    <citation type="submission" date="2005-09" db="EMBL/GenBank/DDBJ databases">
        <authorList>
            <person name="Mural R.J."/>
            <person name="Istrail S."/>
            <person name="Sutton G.G."/>
            <person name="Florea L."/>
            <person name="Halpern A.L."/>
            <person name="Mobarry C.M."/>
            <person name="Lippert R."/>
            <person name="Walenz B."/>
            <person name="Shatkay H."/>
            <person name="Dew I."/>
            <person name="Miller J.R."/>
            <person name="Flanigan M.J."/>
            <person name="Edwards N.J."/>
            <person name="Bolanos R."/>
            <person name="Fasulo D."/>
            <person name="Halldorsson B.V."/>
            <person name="Hannenhalli S."/>
            <person name="Turner R."/>
            <person name="Yooseph S."/>
            <person name="Lu F."/>
            <person name="Nusskern D.R."/>
            <person name="Shue B.C."/>
            <person name="Zheng X.H."/>
            <person name="Zhong F."/>
            <person name="Delcher A.L."/>
            <person name="Huson D.H."/>
            <person name="Kravitz S.A."/>
            <person name="Mouchard L."/>
            <person name="Reinert K."/>
            <person name="Remington K.A."/>
            <person name="Clark A.G."/>
            <person name="Waterman M.S."/>
            <person name="Eichler E.E."/>
            <person name="Adams M.D."/>
            <person name="Hunkapiller M.W."/>
            <person name="Myers E.W."/>
            <person name="Venter J.C."/>
        </authorList>
    </citation>
    <scope>NUCLEOTIDE SEQUENCE [LARGE SCALE GENOMIC DNA]</scope>
</reference>
<reference key="6">
    <citation type="journal article" date="2004" name="Genome Res.">
        <title>The status, quality, and expansion of the NIH full-length cDNA project: the Mammalian Gene Collection (MGC).</title>
        <authorList>
            <consortium name="The MGC Project Team"/>
        </authorList>
    </citation>
    <scope>NUCLEOTIDE SEQUENCE [LARGE SCALE MRNA]</scope>
    <source>
        <tissue>Liver</tissue>
    </source>
</reference>
<reference key="7">
    <citation type="journal article" date="2003" name="Biochem. J.">
        <title>Molecular cloning and characterization of CIDE-3, a novel member of the cell-death-inducing DNA-fragmentation-factor (DFF45)-like effector family.</title>
        <authorList>
            <person name="Liang L."/>
            <person name="Zhao M."/>
            <person name="Xu Z."/>
            <person name="Yokoyama K.K."/>
            <person name="Li T."/>
        </authorList>
    </citation>
    <scope>TISSUE SPECIFICITY</scope>
</reference>
<reference key="8">
    <citation type="journal article" date="2016" name="Sci. Rep.">
        <title>Cell-death-inducing DFFA-like Effector B Contributes to the Assembly of Hepatitis C Virus (HCV) Particles and Interacts with HCV NS5A.</title>
        <authorList>
            <person name="Cai H."/>
            <person name="Yao W."/>
            <person name="Li L."/>
            <person name="Li X."/>
            <person name="Hu L."/>
            <person name="Mai R."/>
            <person name="Peng T."/>
        </authorList>
    </citation>
    <scope>INTERACTION WITH HCV NON-STRUCTURAL PROTEIN 5A (MICROBIAL INFECTION)</scope>
    <scope>FUNCTION (MICROBIAL INFECTION)</scope>
</reference>
<reference key="9">
    <citation type="journal article" date="2022" name="N. Engl. J. Med.">
        <title>Germline Mutations in CIDEB and Protection against Liver Disease.</title>
        <authorList>
            <person name="Verweij N."/>
            <person name="Haas M.E."/>
            <person name="Nielsen J.B."/>
            <person name="Sosina O.A."/>
            <person name="Kim M."/>
            <person name="Akbari P."/>
            <person name="De T."/>
            <person name="Hindy G."/>
            <person name="Bovijn J."/>
            <person name="Persaud T."/>
            <person name="Miloscio L."/>
            <person name="Germino M."/>
            <person name="Panagis L."/>
            <person name="Watanabe K."/>
            <person name="Mbatchou J."/>
            <person name="Jones M."/>
            <person name="LeBlanc M."/>
            <person name="Balasubramanian S."/>
            <person name="Lammert C."/>
            <person name="Enhoerning S."/>
            <person name="Melander O."/>
            <person name="Carey D.J."/>
            <person name="Still C.D."/>
            <person name="Mirshahi T."/>
            <person name="Rader D.J."/>
            <person name="Parasoglou P."/>
            <person name="Walls J.R."/>
            <person name="Overton J.D."/>
            <person name="Reid J.G."/>
            <person name="Economides A."/>
            <person name="Cantor M.N."/>
            <person name="Zambrowicz B."/>
            <person name="Murphy A.J."/>
            <person name="Abecasis G.R."/>
            <person name="Ferreira M.A.R."/>
            <person name="Smagris E."/>
            <person name="Gusarova V."/>
            <person name="Sleeman M."/>
            <person name="Yancopoulos G.D."/>
            <person name="Marchini J."/>
            <person name="Kang H.M."/>
            <person name="Karalis K."/>
            <person name="Shuldiner A.R."/>
            <person name="Della Gatta G."/>
            <person name="Locke A.E."/>
            <person name="Baras A."/>
            <person name="Lotta L.A."/>
        </authorList>
    </citation>
    <scope>FUNCTION</scope>
    <scope>SUBCELLULAR LOCATION</scope>
</reference>
<gene>
    <name evidence="9 11" type="primary">CIDEB</name>
</gene>
<name>CIDEB_HUMAN</name>
<organism>
    <name type="scientific">Homo sapiens</name>
    <name type="common">Human</name>
    <dbReference type="NCBI Taxonomy" id="9606"/>
    <lineage>
        <taxon>Eukaryota</taxon>
        <taxon>Metazoa</taxon>
        <taxon>Chordata</taxon>
        <taxon>Craniata</taxon>
        <taxon>Vertebrata</taxon>
        <taxon>Euteleostomi</taxon>
        <taxon>Mammalia</taxon>
        <taxon>Eutheria</taxon>
        <taxon>Euarchontoglires</taxon>
        <taxon>Primates</taxon>
        <taxon>Haplorrhini</taxon>
        <taxon>Catarrhini</taxon>
        <taxon>Hominidae</taxon>
        <taxon>Homo</taxon>
    </lineage>
</organism>
<feature type="chain" id="PRO_0000144720" description="Lipid transferase CIDEB">
    <location>
        <begin position="1"/>
        <end position="219"/>
    </location>
</feature>
<feature type="domain" description="CIDE-N" evidence="3">
    <location>
        <begin position="34"/>
        <end position="110"/>
    </location>
</feature>
<feature type="sequence conflict" description="In Ref. 1; AAF23324." evidence="10" ref="1">
    <original>L</original>
    <variation>P</variation>
    <location>
        <position position="120"/>
    </location>
</feature>
<feature type="sequence conflict" description="In Ref. 1; AAF23324." evidence="10" ref="1">
    <original>R</original>
    <variation>S</variation>
    <location>
        <position position="124"/>
    </location>
</feature>
<feature type="sequence conflict" description="In Ref. 1; AAF23324." evidence="10" ref="1">
    <original>A</original>
    <variation>G</variation>
    <location>
        <position position="132"/>
    </location>
</feature>
<feature type="strand" evidence="12">
    <location>
        <begin position="9"/>
        <end position="12"/>
    </location>
</feature>
<feature type="strand" evidence="12">
    <location>
        <begin position="36"/>
        <end position="41"/>
    </location>
</feature>
<feature type="strand" evidence="12">
    <location>
        <begin position="43"/>
        <end position="46"/>
    </location>
</feature>
<feature type="strand" evidence="12">
    <location>
        <begin position="48"/>
        <end position="53"/>
    </location>
</feature>
<feature type="helix" evidence="12">
    <location>
        <begin position="59"/>
        <end position="67"/>
    </location>
</feature>
<feature type="strand" evidence="12">
    <location>
        <begin position="74"/>
        <end position="77"/>
    </location>
</feature>
<feature type="turn" evidence="12">
    <location>
        <begin position="78"/>
        <end position="81"/>
    </location>
</feature>
<feature type="strand" evidence="12">
    <location>
        <begin position="82"/>
        <end position="84"/>
    </location>
</feature>
<feature type="helix" evidence="12">
    <location>
        <begin position="88"/>
        <end position="92"/>
    </location>
</feature>
<feature type="strand" evidence="12">
    <location>
        <begin position="93"/>
        <end position="95"/>
    </location>
</feature>
<protein>
    <recommendedName>
        <fullName evidence="10">Lipid transferase CIDEB</fullName>
    </recommendedName>
    <alternativeName>
        <fullName evidence="8">Cell death activator CIDE-B</fullName>
    </alternativeName>
    <alternativeName>
        <fullName evidence="8">Cell death-inducing DFFA-like effector B</fullName>
    </alternativeName>
</protein>
<dbReference type="EMBL" id="AF190901">
    <property type="protein sequence ID" value="AAF23324.1"/>
    <property type="molecule type" value="mRNA"/>
</dbReference>
<dbReference type="EMBL" id="AF218586">
    <property type="protein sequence ID" value="AAF27658.1"/>
    <property type="molecule type" value="mRNA"/>
</dbReference>
<dbReference type="EMBL" id="AF544398">
    <property type="protein sequence ID" value="AAN37907.1"/>
    <property type="molecule type" value="mRNA"/>
</dbReference>
<dbReference type="EMBL" id="AK000387">
    <property type="protein sequence ID" value="BAA91132.1"/>
    <property type="molecule type" value="mRNA"/>
</dbReference>
<dbReference type="EMBL" id="CH471078">
    <property type="protein sequence ID" value="EAW66031.1"/>
    <property type="molecule type" value="Genomic_DNA"/>
</dbReference>
<dbReference type="EMBL" id="CH471078">
    <property type="protein sequence ID" value="EAW66032.1"/>
    <property type="molecule type" value="Genomic_DNA"/>
</dbReference>
<dbReference type="EMBL" id="CH471078">
    <property type="protein sequence ID" value="EAW66033.1"/>
    <property type="molecule type" value="Genomic_DNA"/>
</dbReference>
<dbReference type="EMBL" id="BC035970">
    <property type="protein sequence ID" value="AAH35970.1"/>
    <property type="molecule type" value="mRNA"/>
</dbReference>
<dbReference type="CCDS" id="CCDS32056.1"/>
<dbReference type="RefSeq" id="NP_001305736.1">
    <property type="nucleotide sequence ID" value="NM_001318807.3"/>
</dbReference>
<dbReference type="RefSeq" id="NP_001380263.1">
    <property type="nucleotide sequence ID" value="NM_001393334.1"/>
</dbReference>
<dbReference type="RefSeq" id="NP_001380264.1">
    <property type="nucleotide sequence ID" value="NM_001393335.1"/>
</dbReference>
<dbReference type="RefSeq" id="NP_001380265.1">
    <property type="nucleotide sequence ID" value="NM_001393336.1"/>
</dbReference>
<dbReference type="RefSeq" id="NP_001380266.1">
    <property type="nucleotide sequence ID" value="NM_001393337.1"/>
</dbReference>
<dbReference type="RefSeq" id="NP_001380267.1">
    <property type="nucleotide sequence ID" value="NM_001393338.1"/>
</dbReference>
<dbReference type="RefSeq" id="NP_001380268.1">
    <property type="nucleotide sequence ID" value="NM_001393339.1"/>
</dbReference>
<dbReference type="RefSeq" id="NP_055245.2">
    <property type="nucleotide sequence ID" value="NM_014430.4"/>
</dbReference>
<dbReference type="RefSeq" id="XP_011534961.1">
    <property type="nucleotide sequence ID" value="XM_011536659.2"/>
</dbReference>
<dbReference type="RefSeq" id="XP_016876710.1">
    <property type="nucleotide sequence ID" value="XM_017021221.1"/>
</dbReference>
<dbReference type="RefSeq" id="XP_054188311.1">
    <property type="nucleotide sequence ID" value="XM_054332336.1"/>
</dbReference>
<dbReference type="RefSeq" id="XP_054231848.1">
    <property type="nucleotide sequence ID" value="XM_054375873.1"/>
</dbReference>
<dbReference type="PDB" id="1D4B">
    <property type="method" value="NMR"/>
    <property type="chains" value="A=1-116"/>
</dbReference>
<dbReference type="PDBsum" id="1D4B"/>
<dbReference type="BMRB" id="Q9UHD4"/>
<dbReference type="SMR" id="Q9UHD4"/>
<dbReference type="BioGRID" id="118027">
    <property type="interactions" value="78"/>
</dbReference>
<dbReference type="FunCoup" id="Q9UHD4">
    <property type="interactions" value="135"/>
</dbReference>
<dbReference type="IntAct" id="Q9UHD4">
    <property type="interactions" value="73"/>
</dbReference>
<dbReference type="STRING" id="9606.ENSP00000337731"/>
<dbReference type="iPTMnet" id="Q9UHD4"/>
<dbReference type="PhosphoSitePlus" id="Q9UHD4"/>
<dbReference type="BioMuta" id="CIDEB"/>
<dbReference type="DMDM" id="20141283"/>
<dbReference type="jPOST" id="Q9UHD4"/>
<dbReference type="MassIVE" id="Q9UHD4"/>
<dbReference type="PaxDb" id="9606-ENSP00000337731"/>
<dbReference type="PeptideAtlas" id="Q9UHD4"/>
<dbReference type="ProteomicsDB" id="84324"/>
<dbReference type="Antibodypedia" id="9150">
    <property type="antibodies" value="326 antibodies from 35 providers"/>
</dbReference>
<dbReference type="DNASU" id="27141"/>
<dbReference type="Ensembl" id="ENST00000258807.5">
    <property type="protein sequence ID" value="ENSP00000258807.5"/>
    <property type="gene ID" value="ENSG00000136305.12"/>
</dbReference>
<dbReference type="Ensembl" id="ENST00000336557.9">
    <property type="protein sequence ID" value="ENSP00000337731.5"/>
    <property type="gene ID" value="ENSG00000136305.12"/>
</dbReference>
<dbReference type="Ensembl" id="ENST00000554411.6">
    <property type="protein sequence ID" value="ENSP00000451089.1"/>
    <property type="gene ID" value="ENSG00000136305.12"/>
</dbReference>
<dbReference type="Ensembl" id="ENST00000642223.1">
    <property type="protein sequence ID" value="ENSP00000493738.1"/>
    <property type="gene ID" value="ENSG00000285199.1"/>
</dbReference>
<dbReference type="Ensembl" id="ENST00000644519.1">
    <property type="protein sequence ID" value="ENSP00000494868.1"/>
    <property type="gene ID" value="ENSG00000285199.1"/>
</dbReference>
<dbReference type="Ensembl" id="ENST00000644672.1">
    <property type="protein sequence ID" value="ENSP00000495235.1"/>
    <property type="gene ID" value="ENSG00000285199.1"/>
</dbReference>
<dbReference type="GeneID" id="27141"/>
<dbReference type="KEGG" id="hsa:27141"/>
<dbReference type="MANE-Select" id="ENST00000554411.6">
    <property type="protein sequence ID" value="ENSP00000451089.1"/>
    <property type="RefSeq nucleotide sequence ID" value="NM_001393339.1"/>
    <property type="RefSeq protein sequence ID" value="NP_001380268.1"/>
</dbReference>
<dbReference type="UCSC" id="uc001won.4">
    <property type="organism name" value="human"/>
</dbReference>
<dbReference type="AGR" id="HGNC:1977"/>
<dbReference type="CTD" id="27141"/>
<dbReference type="DisGeNET" id="27141"/>
<dbReference type="GeneCards" id="CIDEB"/>
<dbReference type="HGNC" id="HGNC:1977">
    <property type="gene designation" value="CIDEB"/>
</dbReference>
<dbReference type="HPA" id="ENSG00000136305">
    <property type="expression patterns" value="Tissue enhanced (intestine, liver)"/>
</dbReference>
<dbReference type="MIM" id="604441">
    <property type="type" value="gene"/>
</dbReference>
<dbReference type="neXtProt" id="NX_Q9UHD4"/>
<dbReference type="OpenTargets" id="ENSG00000136305"/>
<dbReference type="PharmGKB" id="PA26515"/>
<dbReference type="VEuPathDB" id="HostDB:ENSG00000136305"/>
<dbReference type="eggNOG" id="ENOG502RUS7">
    <property type="taxonomic scope" value="Eukaryota"/>
</dbReference>
<dbReference type="GeneTree" id="ENSGT00390000018596"/>
<dbReference type="HOGENOM" id="CLU_090011_0_0_1"/>
<dbReference type="InParanoid" id="Q9UHD4"/>
<dbReference type="OMA" id="PFRICCN"/>
<dbReference type="OrthoDB" id="6475906at2759"/>
<dbReference type="PAN-GO" id="Q9UHD4">
    <property type="GO annotations" value="1 GO annotation based on evolutionary models"/>
</dbReference>
<dbReference type="PhylomeDB" id="Q9UHD4"/>
<dbReference type="TreeFam" id="TF334321"/>
<dbReference type="PathwayCommons" id="Q9UHD4"/>
<dbReference type="SignaLink" id="Q9UHD4"/>
<dbReference type="BioGRID-ORCS" id="27141">
    <property type="hits" value="18 hits in 1079 CRISPR screens"/>
</dbReference>
<dbReference type="ChiTaRS" id="CIDEB">
    <property type="organism name" value="human"/>
</dbReference>
<dbReference type="EvolutionaryTrace" id="Q9UHD4"/>
<dbReference type="GenomeRNAi" id="27141"/>
<dbReference type="Pharos" id="Q9UHD4">
    <property type="development level" value="Tbio"/>
</dbReference>
<dbReference type="PRO" id="PR:Q9UHD4"/>
<dbReference type="Proteomes" id="UP000005640">
    <property type="component" value="Chromosome 14"/>
</dbReference>
<dbReference type="RNAct" id="Q9UHD4">
    <property type="molecule type" value="protein"/>
</dbReference>
<dbReference type="Bgee" id="ENSG00000136305">
    <property type="expression patterns" value="Expressed in right lobe of liver and 100 other cell types or tissues"/>
</dbReference>
<dbReference type="ExpressionAtlas" id="Q9UHD4">
    <property type="expression patterns" value="baseline and differential"/>
</dbReference>
<dbReference type="GO" id="GO:0030137">
    <property type="term" value="C:COPI-coated vesicle"/>
    <property type="evidence" value="ECO:0007669"/>
    <property type="project" value="UniProtKB-SubCell"/>
</dbReference>
<dbReference type="GO" id="GO:0030127">
    <property type="term" value="C:COPII vesicle coat"/>
    <property type="evidence" value="ECO:0000250"/>
    <property type="project" value="UniProtKB"/>
</dbReference>
<dbReference type="GO" id="GO:0005829">
    <property type="term" value="C:cytosol"/>
    <property type="evidence" value="ECO:0000314"/>
    <property type="project" value="MGI"/>
</dbReference>
<dbReference type="GO" id="GO:0005783">
    <property type="term" value="C:endoplasmic reticulum"/>
    <property type="evidence" value="ECO:0000250"/>
    <property type="project" value="UniProtKB"/>
</dbReference>
<dbReference type="GO" id="GO:0005789">
    <property type="term" value="C:endoplasmic reticulum membrane"/>
    <property type="evidence" value="ECO:0000250"/>
    <property type="project" value="UniProtKB"/>
</dbReference>
<dbReference type="GO" id="GO:0005794">
    <property type="term" value="C:Golgi apparatus"/>
    <property type="evidence" value="ECO:0007669"/>
    <property type="project" value="UniProtKB-SubCell"/>
</dbReference>
<dbReference type="GO" id="GO:0005811">
    <property type="term" value="C:lipid droplet"/>
    <property type="evidence" value="ECO:0000314"/>
    <property type="project" value="UniProtKB"/>
</dbReference>
<dbReference type="GO" id="GO:0048471">
    <property type="term" value="C:perinuclear region of cytoplasm"/>
    <property type="evidence" value="ECO:0000314"/>
    <property type="project" value="AgBase"/>
</dbReference>
<dbReference type="GO" id="GO:0042802">
    <property type="term" value="F:identical protein binding"/>
    <property type="evidence" value="ECO:0000353"/>
    <property type="project" value="IntAct"/>
</dbReference>
<dbReference type="GO" id="GO:0120013">
    <property type="term" value="F:lipid transfer activity"/>
    <property type="evidence" value="ECO:0000250"/>
    <property type="project" value="UniProtKB"/>
</dbReference>
<dbReference type="GO" id="GO:0060090">
    <property type="term" value="F:molecular adaptor activity"/>
    <property type="evidence" value="ECO:0000250"/>
    <property type="project" value="UniProtKB"/>
</dbReference>
<dbReference type="GO" id="GO:0070300">
    <property type="term" value="F:phosphatidic acid binding"/>
    <property type="evidence" value="ECO:0007669"/>
    <property type="project" value="Ensembl"/>
</dbReference>
<dbReference type="GO" id="GO:0006915">
    <property type="term" value="P:apoptotic process"/>
    <property type="evidence" value="ECO:0000314"/>
    <property type="project" value="MGI"/>
</dbReference>
<dbReference type="GO" id="GO:0090110">
    <property type="term" value="P:COPII-coated vesicle cargo loading"/>
    <property type="evidence" value="ECO:0000250"/>
    <property type="project" value="UniProtKB"/>
</dbReference>
<dbReference type="GO" id="GO:0097194">
    <property type="term" value="P:execution phase of apoptosis"/>
    <property type="evidence" value="ECO:0000250"/>
    <property type="project" value="BHF-UCL"/>
</dbReference>
<dbReference type="GO" id="GO:0008630">
    <property type="term" value="P:intrinsic apoptotic signaling pathway in response to DNA damage"/>
    <property type="evidence" value="ECO:0000304"/>
    <property type="project" value="ProtInc"/>
</dbReference>
<dbReference type="GO" id="GO:0160077">
    <property type="term" value="P:lipid droplet fusion"/>
    <property type="evidence" value="ECO:0000315"/>
    <property type="project" value="UniProtKB"/>
</dbReference>
<dbReference type="GO" id="GO:0019915">
    <property type="term" value="P:lipid storage"/>
    <property type="evidence" value="ECO:0007669"/>
    <property type="project" value="Ensembl"/>
</dbReference>
<dbReference type="GO" id="GO:0043065">
    <property type="term" value="P:positive regulation of apoptotic process"/>
    <property type="evidence" value="ECO:0000314"/>
    <property type="project" value="AgBase"/>
</dbReference>
<dbReference type="GO" id="GO:0042981">
    <property type="term" value="P:regulation of apoptotic process"/>
    <property type="evidence" value="ECO:0000318"/>
    <property type="project" value="GO_Central"/>
</dbReference>
<dbReference type="GO" id="GO:0090207">
    <property type="term" value="P:regulation of triglyceride metabolic process"/>
    <property type="evidence" value="ECO:0000250"/>
    <property type="project" value="UniProtKB"/>
</dbReference>
<dbReference type="GO" id="GO:0031667">
    <property type="term" value="P:response to nutrient levels"/>
    <property type="evidence" value="ECO:0007669"/>
    <property type="project" value="Ensembl"/>
</dbReference>
<dbReference type="GO" id="GO:0034379">
    <property type="term" value="P:very-low-density lipoprotein particle assembly"/>
    <property type="evidence" value="ECO:0000250"/>
    <property type="project" value="UniProtKB"/>
</dbReference>
<dbReference type="CDD" id="cd06537">
    <property type="entry name" value="CIDE_N_B"/>
    <property type="match status" value="1"/>
</dbReference>
<dbReference type="FunFam" id="3.10.20.10:FF:000005">
    <property type="entry name" value="Cell death activator CIDE-B"/>
    <property type="match status" value="1"/>
</dbReference>
<dbReference type="Gene3D" id="3.10.20.10">
    <property type="match status" value="1"/>
</dbReference>
<dbReference type="InterPro" id="IPR003508">
    <property type="entry name" value="CIDE-N_dom"/>
</dbReference>
<dbReference type="PANTHER" id="PTHR12306">
    <property type="entry name" value="CELL DEATH ACTIVATOR CIDE"/>
    <property type="match status" value="1"/>
</dbReference>
<dbReference type="PANTHER" id="PTHR12306:SF10">
    <property type="entry name" value="LIPID TRANSFERASE CIDEB"/>
    <property type="match status" value="1"/>
</dbReference>
<dbReference type="Pfam" id="PF02017">
    <property type="entry name" value="CIDE-N"/>
    <property type="match status" value="1"/>
</dbReference>
<dbReference type="SMART" id="SM00266">
    <property type="entry name" value="CAD"/>
    <property type="match status" value="1"/>
</dbReference>
<dbReference type="SUPFAM" id="SSF54277">
    <property type="entry name" value="CAD &amp; PB1 domains"/>
    <property type="match status" value="1"/>
</dbReference>
<dbReference type="PROSITE" id="PS51135">
    <property type="entry name" value="CIDE_N"/>
    <property type="match status" value="1"/>
</dbReference>
<evidence type="ECO:0000250" key="1">
    <source>
        <dbReference type="UniProtKB" id="O70303"/>
    </source>
</evidence>
<evidence type="ECO:0000250" key="2">
    <source>
        <dbReference type="UniProtKB" id="P56198"/>
    </source>
</evidence>
<evidence type="ECO:0000255" key="3">
    <source>
        <dbReference type="PROSITE-ProRule" id="PRU00447"/>
    </source>
</evidence>
<evidence type="ECO:0000269" key="4">
    <source>
    </source>
</evidence>
<evidence type="ECO:0000269" key="5">
    <source>
    </source>
</evidence>
<evidence type="ECO:0000269" key="6">
    <source>
    </source>
</evidence>
<evidence type="ECO:0000269" key="7">
    <source>
    </source>
</evidence>
<evidence type="ECO:0000303" key="8">
    <source>
    </source>
</evidence>
<evidence type="ECO:0000303" key="9">
    <source>
    </source>
</evidence>
<evidence type="ECO:0000305" key="10"/>
<evidence type="ECO:0000312" key="11">
    <source>
        <dbReference type="HGNC" id="HGNC:1977"/>
    </source>
</evidence>
<evidence type="ECO:0007829" key="12">
    <source>
        <dbReference type="PDB" id="1D4B"/>
    </source>
</evidence>